<proteinExistence type="inferred from homology"/>
<name>GLUP_HELPY</name>
<evidence type="ECO:0000255" key="1"/>
<evidence type="ECO:0000305" key="2"/>
<dbReference type="EMBL" id="AE000511">
    <property type="protein sequence ID" value="AAD08219.1"/>
    <property type="molecule type" value="Genomic_DNA"/>
</dbReference>
<dbReference type="PIR" id="F64666">
    <property type="entry name" value="F64666"/>
</dbReference>
<dbReference type="RefSeq" id="NP_207965.1">
    <property type="nucleotide sequence ID" value="NC_000915.1"/>
</dbReference>
<dbReference type="RefSeq" id="WP_001174195.1">
    <property type="nucleotide sequence ID" value="NC_018939.1"/>
</dbReference>
<dbReference type="SMR" id="O25788"/>
<dbReference type="FunCoup" id="O25788">
    <property type="interactions" value="35"/>
</dbReference>
<dbReference type="IntAct" id="O25788">
    <property type="interactions" value="1"/>
</dbReference>
<dbReference type="STRING" id="85962.HP_1174"/>
<dbReference type="TCDB" id="2.A.1.7.7">
    <property type="family name" value="the major facilitator superfamily (mfs)"/>
</dbReference>
<dbReference type="PaxDb" id="85962-C694_06065"/>
<dbReference type="EnsemblBacteria" id="AAD08219">
    <property type="protein sequence ID" value="AAD08219"/>
    <property type="gene ID" value="HP_1174"/>
</dbReference>
<dbReference type="KEGG" id="heo:C694_06065"/>
<dbReference type="KEGG" id="hpy:HP_1174"/>
<dbReference type="PATRIC" id="fig|85962.47.peg.1261"/>
<dbReference type="eggNOG" id="COG0738">
    <property type="taxonomic scope" value="Bacteria"/>
</dbReference>
<dbReference type="InParanoid" id="O25788"/>
<dbReference type="OrthoDB" id="9795150at2"/>
<dbReference type="PhylomeDB" id="O25788"/>
<dbReference type="BioCyc" id="MetaCyc:HP_RS05770-MONOMER"/>
<dbReference type="Proteomes" id="UP000000429">
    <property type="component" value="Chromosome"/>
</dbReference>
<dbReference type="GO" id="GO:0005886">
    <property type="term" value="C:plasma membrane"/>
    <property type="evidence" value="ECO:0007669"/>
    <property type="project" value="UniProtKB-SubCell"/>
</dbReference>
<dbReference type="GO" id="GO:0055056">
    <property type="term" value="F:D-glucose transmembrane transporter activity"/>
    <property type="evidence" value="ECO:0007669"/>
    <property type="project" value="InterPro"/>
</dbReference>
<dbReference type="GO" id="GO:0005354">
    <property type="term" value="F:galactose transmembrane transporter activity"/>
    <property type="evidence" value="ECO:0007669"/>
    <property type="project" value="InterPro"/>
</dbReference>
<dbReference type="GO" id="GO:1904659">
    <property type="term" value="P:D-glucose transmembrane transport"/>
    <property type="evidence" value="ECO:0007669"/>
    <property type="project" value="InterPro"/>
</dbReference>
<dbReference type="CDD" id="cd17394">
    <property type="entry name" value="MFS_FucP_like"/>
    <property type="match status" value="1"/>
</dbReference>
<dbReference type="Gene3D" id="1.20.1250.20">
    <property type="entry name" value="MFS general substrate transporter like domains"/>
    <property type="match status" value="2"/>
</dbReference>
<dbReference type="InterPro" id="IPR005964">
    <property type="entry name" value="Glc/Gal_transptr_bac"/>
</dbReference>
<dbReference type="InterPro" id="IPR011701">
    <property type="entry name" value="MFS"/>
</dbReference>
<dbReference type="InterPro" id="IPR036259">
    <property type="entry name" value="MFS_trans_sf"/>
</dbReference>
<dbReference type="InterPro" id="IPR050375">
    <property type="entry name" value="MFS_TsgA-like"/>
</dbReference>
<dbReference type="NCBIfam" id="TIGR01272">
    <property type="entry name" value="gluP"/>
    <property type="match status" value="1"/>
</dbReference>
<dbReference type="PANTHER" id="PTHR43702">
    <property type="entry name" value="L-FUCOSE-PROTON SYMPORTER"/>
    <property type="match status" value="1"/>
</dbReference>
<dbReference type="PANTHER" id="PTHR43702:SF3">
    <property type="entry name" value="PROTEIN TSGA"/>
    <property type="match status" value="1"/>
</dbReference>
<dbReference type="Pfam" id="PF07690">
    <property type="entry name" value="MFS_1"/>
    <property type="match status" value="1"/>
</dbReference>
<dbReference type="SUPFAM" id="SSF103473">
    <property type="entry name" value="MFS general substrate transporter"/>
    <property type="match status" value="1"/>
</dbReference>
<accession>O25788</accession>
<protein>
    <recommendedName>
        <fullName>Putative glucose/galactose transporter</fullName>
    </recommendedName>
</protein>
<gene>
    <name type="primary">gluP</name>
    <name type="ordered locus">HP_1174</name>
</gene>
<sequence>MQKTSNTLALGSLTALFFLMGFITVLNDILIPHLKPIFDLTYFEASLIQFCFFGAYFIMGGVFGNVISKIGYPFGVVLGFVITATGCALFYPAAHFGSYGFFLGALFILASGIVCLQTAGNPFVTLLSKGKEARNLVLVQAFNSLGTTLGPIFGSLLIFSTTKMGDNASLIDKLADAKSVQMPYLGLAVFSLLLALIMYLLKLPDVEKEMPKETTQKSLFSHKHFVFGALGIFFYVGGEVAIGSFLVLSFEKLLNLDSQSSAHYLVYYWGGAMVGRFLGSVLMNKIAPNKYLAFNALSSIVLIALAIIIGGKIALFALTFVGFFNSIMFPTIFSLATLNLGHLTSKASGVISMAIVGGALIPPIQGAVTDMLTATESNLLYAYGVPLLCYFYILFFALKGYKQEENS</sequence>
<keyword id="KW-0997">Cell inner membrane</keyword>
<keyword id="KW-1003">Cell membrane</keyword>
<keyword id="KW-0472">Membrane</keyword>
<keyword id="KW-1185">Reference proteome</keyword>
<keyword id="KW-0762">Sugar transport</keyword>
<keyword id="KW-0812">Transmembrane</keyword>
<keyword id="KW-1133">Transmembrane helix</keyword>
<keyword id="KW-0813">Transport</keyword>
<organism>
    <name type="scientific">Helicobacter pylori (strain ATCC 700392 / 26695)</name>
    <name type="common">Campylobacter pylori</name>
    <dbReference type="NCBI Taxonomy" id="85962"/>
    <lineage>
        <taxon>Bacteria</taxon>
        <taxon>Pseudomonadati</taxon>
        <taxon>Campylobacterota</taxon>
        <taxon>Epsilonproteobacteria</taxon>
        <taxon>Campylobacterales</taxon>
        <taxon>Helicobacteraceae</taxon>
        <taxon>Helicobacter</taxon>
    </lineage>
</organism>
<comment type="function">
    <text evidence="2">Intake of glucose and galactose.</text>
</comment>
<comment type="subcellular location">
    <subcellularLocation>
        <location evidence="2">Cell inner membrane</location>
        <topology evidence="2">Multi-pass membrane protein</topology>
    </subcellularLocation>
</comment>
<comment type="similarity">
    <text evidence="2">Belongs to the major facilitator superfamily. FHS transporter (TC 2.A.1.7) family.</text>
</comment>
<feature type="chain" id="PRO_0000094506" description="Putative glucose/galactose transporter">
    <location>
        <begin position="1"/>
        <end position="407"/>
    </location>
</feature>
<feature type="transmembrane region" description="Helical" evidence="1">
    <location>
        <begin position="11"/>
        <end position="31"/>
    </location>
</feature>
<feature type="transmembrane region" description="Helical" evidence="1">
    <location>
        <begin position="47"/>
        <end position="67"/>
    </location>
</feature>
<feature type="transmembrane region" description="Helical" evidence="1">
    <location>
        <begin position="70"/>
        <end position="90"/>
    </location>
</feature>
<feature type="transmembrane region" description="Helical" evidence="1">
    <location>
        <begin position="96"/>
        <end position="116"/>
    </location>
</feature>
<feature type="transmembrane region" description="Helical" evidence="1">
    <location>
        <begin position="139"/>
        <end position="159"/>
    </location>
</feature>
<feature type="transmembrane region" description="Helical" evidence="1">
    <location>
        <begin position="180"/>
        <end position="200"/>
    </location>
</feature>
<feature type="transmembrane region" description="Helical" evidence="1">
    <location>
        <begin position="225"/>
        <end position="245"/>
    </location>
</feature>
<feature type="transmembrane region" description="Helical" evidence="1">
    <location>
        <begin position="263"/>
        <end position="283"/>
    </location>
</feature>
<feature type="transmembrane region" description="Helical" evidence="1">
    <location>
        <begin position="300"/>
        <end position="320"/>
    </location>
</feature>
<feature type="transmembrane region" description="Helical" evidence="1">
    <location>
        <begin position="321"/>
        <end position="341"/>
    </location>
</feature>
<feature type="transmembrane region" description="Helical" evidence="1">
    <location>
        <begin position="349"/>
        <end position="369"/>
    </location>
</feature>
<feature type="transmembrane region" description="Helical" evidence="1">
    <location>
        <begin position="378"/>
        <end position="398"/>
    </location>
</feature>
<reference key="1">
    <citation type="journal article" date="1997" name="Nature">
        <title>The complete genome sequence of the gastric pathogen Helicobacter pylori.</title>
        <authorList>
            <person name="Tomb J.-F."/>
            <person name="White O."/>
            <person name="Kerlavage A.R."/>
            <person name="Clayton R.A."/>
            <person name="Sutton G.G."/>
            <person name="Fleischmann R.D."/>
            <person name="Ketchum K.A."/>
            <person name="Klenk H.-P."/>
            <person name="Gill S.R."/>
            <person name="Dougherty B.A."/>
            <person name="Nelson K.E."/>
            <person name="Quackenbush J."/>
            <person name="Zhou L."/>
            <person name="Kirkness E.F."/>
            <person name="Peterson S.N."/>
            <person name="Loftus B.J."/>
            <person name="Richardson D.L."/>
            <person name="Dodson R.J."/>
            <person name="Khalak H.G."/>
            <person name="Glodek A."/>
            <person name="McKenney K."/>
            <person name="FitzGerald L.M."/>
            <person name="Lee N."/>
            <person name="Adams M.D."/>
            <person name="Hickey E.K."/>
            <person name="Berg D.E."/>
            <person name="Gocayne J.D."/>
            <person name="Utterback T.R."/>
            <person name="Peterson J.D."/>
            <person name="Kelley J.M."/>
            <person name="Cotton M.D."/>
            <person name="Weidman J.F."/>
            <person name="Fujii C."/>
            <person name="Bowman C."/>
            <person name="Watthey L."/>
            <person name="Wallin E."/>
            <person name="Hayes W.S."/>
            <person name="Borodovsky M."/>
            <person name="Karp P.D."/>
            <person name="Smith H.O."/>
            <person name="Fraser C.M."/>
            <person name="Venter J.C."/>
        </authorList>
    </citation>
    <scope>NUCLEOTIDE SEQUENCE [LARGE SCALE GENOMIC DNA]</scope>
    <source>
        <strain>ATCC 700392 / 26695</strain>
    </source>
</reference>